<keyword id="KW-1043">Host membrane</keyword>
<keyword id="KW-0472">Membrane</keyword>
<keyword id="KW-1185">Reference proteome</keyword>
<keyword id="KW-0812">Transmembrane</keyword>
<keyword id="KW-1133">Transmembrane helix</keyword>
<organismHost>
    <name type="scientific">Homo sapiens</name>
    <name type="common">Human</name>
    <dbReference type="NCBI Taxonomy" id="9606"/>
</organismHost>
<protein>
    <recommendedName>
        <fullName>Uncharacterized protein US29</fullName>
    </recommendedName>
</protein>
<name>US29_HCMVM</name>
<feature type="chain" id="PRO_0000418255" description="Uncharacterized protein US29">
    <location>
        <begin position="1"/>
        <end position="462"/>
    </location>
</feature>
<feature type="transmembrane region" description="Helical" evidence="1">
    <location>
        <begin position="12"/>
        <end position="32"/>
    </location>
</feature>
<feature type="transmembrane region" description="Helical" evidence="1">
    <location>
        <begin position="257"/>
        <end position="277"/>
    </location>
</feature>
<evidence type="ECO:0000255" key="1"/>
<evidence type="ECO:0000305" key="2"/>
<accession>F5HG95</accession>
<proteinExistence type="inferred from homology"/>
<organism>
    <name type="scientific">Human cytomegalovirus (strain Merlin)</name>
    <name type="common">HHV-5</name>
    <name type="synonym">Human herpesvirus 5</name>
    <dbReference type="NCBI Taxonomy" id="295027"/>
    <lineage>
        <taxon>Viruses</taxon>
        <taxon>Duplodnaviria</taxon>
        <taxon>Heunggongvirae</taxon>
        <taxon>Peploviricota</taxon>
        <taxon>Herviviricetes</taxon>
        <taxon>Herpesvirales</taxon>
        <taxon>Orthoherpesviridae</taxon>
        <taxon>Betaherpesvirinae</taxon>
        <taxon>Cytomegalovirus</taxon>
        <taxon>Cytomegalovirus humanbeta5</taxon>
        <taxon>Human cytomegalovirus</taxon>
    </lineage>
</organism>
<gene>
    <name type="primary">US29</name>
</gene>
<reference key="1">
    <citation type="journal article" date="2004" name="J. Gen. Virol.">
        <title>Genetic content of wild-type human cytomegalovirus.</title>
        <authorList>
            <person name="Dolan A."/>
            <person name="Cunningham C."/>
            <person name="Hector R.D."/>
            <person name="Hassan-Walker A.F."/>
            <person name="Lee L."/>
            <person name="Addison C."/>
            <person name="Dargan D.J."/>
            <person name="McGeoch D.J."/>
            <person name="Gatherer D."/>
            <person name="Emery V.C."/>
            <person name="Griffiths P.D."/>
            <person name="Sinzger C."/>
            <person name="McSharry B.P."/>
            <person name="Wilkinson G.W.G."/>
            <person name="Davison A.J."/>
        </authorList>
    </citation>
    <scope>NUCLEOTIDE SEQUENCE [LARGE SCALE GENOMIC DNA]</scope>
</reference>
<comment type="subcellular location">
    <subcellularLocation>
        <location evidence="2">Host membrane</location>
        <topology evidence="2">Multi-pass membrane protein</topology>
    </subcellularLocation>
</comment>
<comment type="similarity">
    <text evidence="2">Belongs to the HHV-5 US29 protein family.</text>
</comment>
<sequence length="462" mass="51034">MRCFRWWLYSGWWWLTFGCARTVTVGFVAPTVRAQSTVVRSEPAPPSETRRDNNDTSYFSSTSFHSSVSPATSVDRQFRRTTYDRWDGRRWLRTRYGNASACVTGTQWSTNFFFSQCEHYPSFVKLNGVQRWTPVRRPMGEVAYYGGCCMVGGGNRAYVILVSGYGTASYGNALRVDFGRGNCTAPKRTYPRRLELHDGRTDPSRCDPYQVYFYGLQCPEQLVITAHGGVGMRRCPTGSRPTPSRPHRHDLENELHGLCVDLLVCVLLLALLLLELVPMEAVRHPLLFWRRVALSPSTSKVDRAVKLCLRRMLGLPPPPSVAPPGEKKELPAQAALSPPLTTWSLPPFPSTRIPDSPPPPYQLRHATSLVTVPTLLLYTSSDIGDTASETTCVAHATYGEPPEPARSTATVQECTVLTAPNCGIVNNDGAVSEGQDHGDAVHHSLDVVSQCAADTGVVDTSE</sequence>
<dbReference type="EMBL" id="AY446894">
    <property type="protein sequence ID" value="AAR31717.1"/>
    <property type="molecule type" value="Genomic_DNA"/>
</dbReference>
<dbReference type="RefSeq" id="YP_081613.1">
    <property type="nucleotide sequence ID" value="NC_006273.2"/>
</dbReference>
<dbReference type="DNASU" id="3077483"/>
<dbReference type="GeneID" id="3077483"/>
<dbReference type="KEGG" id="vg:3077483"/>
<dbReference type="Proteomes" id="UP000000938">
    <property type="component" value="Segment"/>
</dbReference>
<dbReference type="GO" id="GO:0033644">
    <property type="term" value="C:host cell membrane"/>
    <property type="evidence" value="ECO:0007669"/>
    <property type="project" value="UniProtKB-SubCell"/>
</dbReference>
<dbReference type="GO" id="GO:0016020">
    <property type="term" value="C:membrane"/>
    <property type="evidence" value="ECO:0007669"/>
    <property type="project" value="UniProtKB-KW"/>
</dbReference>